<evidence type="ECO:0000255" key="1">
    <source>
        <dbReference type="HAMAP-Rule" id="MF_01588"/>
    </source>
</evidence>
<proteinExistence type="inferred from homology"/>
<gene>
    <name evidence="1" type="primary">ligA</name>
    <name type="ordered locus">WIGBR4350</name>
</gene>
<organism>
    <name type="scientific">Wigglesworthia glossinidia brevipalpis</name>
    <dbReference type="NCBI Taxonomy" id="36870"/>
    <lineage>
        <taxon>Bacteria</taxon>
        <taxon>Pseudomonadati</taxon>
        <taxon>Pseudomonadota</taxon>
        <taxon>Gammaproteobacteria</taxon>
        <taxon>Enterobacterales</taxon>
        <taxon>Erwiniaceae</taxon>
        <taxon>Wigglesworthia</taxon>
    </lineage>
</organism>
<reference key="1">
    <citation type="journal article" date="2002" name="Nat. Genet.">
        <title>Genome sequence of the endocellular obligate symbiont of tsetse flies, Wigglesworthia glossinidia.</title>
        <authorList>
            <person name="Akman L."/>
            <person name="Yamashita A."/>
            <person name="Watanabe H."/>
            <person name="Oshima K."/>
            <person name="Shiba T."/>
            <person name="Hattori M."/>
            <person name="Aksoy S."/>
        </authorList>
    </citation>
    <scope>NUCLEOTIDE SEQUENCE [LARGE SCALE GENOMIC DNA]</scope>
</reference>
<feature type="chain" id="PRO_0000313510" description="DNA ligase">
    <location>
        <begin position="1"/>
        <end position="591"/>
    </location>
</feature>
<feature type="active site" description="N6-AMP-lysine intermediate" evidence="1">
    <location>
        <position position="121"/>
    </location>
</feature>
<feature type="binding site" evidence="1">
    <location>
        <begin position="38"/>
        <end position="42"/>
    </location>
    <ligand>
        <name>NAD(+)</name>
        <dbReference type="ChEBI" id="CHEBI:57540"/>
    </ligand>
</feature>
<feature type="binding site" evidence="1">
    <location>
        <begin position="87"/>
        <end position="88"/>
    </location>
    <ligand>
        <name>NAD(+)</name>
        <dbReference type="ChEBI" id="CHEBI:57540"/>
    </ligand>
</feature>
<feature type="binding site" evidence="1">
    <location>
        <position position="119"/>
    </location>
    <ligand>
        <name>NAD(+)</name>
        <dbReference type="ChEBI" id="CHEBI:57540"/>
    </ligand>
</feature>
<feature type="binding site" evidence="1">
    <location>
        <position position="142"/>
    </location>
    <ligand>
        <name>NAD(+)</name>
        <dbReference type="ChEBI" id="CHEBI:57540"/>
    </ligand>
</feature>
<feature type="binding site" evidence="1">
    <location>
        <position position="181"/>
    </location>
    <ligand>
        <name>NAD(+)</name>
        <dbReference type="ChEBI" id="CHEBI:57540"/>
    </ligand>
</feature>
<feature type="binding site" evidence="1">
    <location>
        <position position="298"/>
    </location>
    <ligand>
        <name>NAD(+)</name>
        <dbReference type="ChEBI" id="CHEBI:57540"/>
    </ligand>
</feature>
<feature type="binding site" evidence="1">
    <location>
        <position position="322"/>
    </location>
    <ligand>
        <name>NAD(+)</name>
        <dbReference type="ChEBI" id="CHEBI:57540"/>
    </ligand>
</feature>
<feature type="binding site" evidence="1">
    <location>
        <position position="415"/>
    </location>
    <ligand>
        <name>Zn(2+)</name>
        <dbReference type="ChEBI" id="CHEBI:29105"/>
    </ligand>
</feature>
<feature type="binding site" evidence="1">
    <location>
        <position position="418"/>
    </location>
    <ligand>
        <name>Zn(2+)</name>
        <dbReference type="ChEBI" id="CHEBI:29105"/>
    </ligand>
</feature>
<feature type="binding site" evidence="1">
    <location>
        <position position="433"/>
    </location>
    <ligand>
        <name>Zn(2+)</name>
        <dbReference type="ChEBI" id="CHEBI:29105"/>
    </ligand>
</feature>
<feature type="binding site" evidence="1">
    <location>
        <position position="439"/>
    </location>
    <ligand>
        <name>Zn(2+)</name>
        <dbReference type="ChEBI" id="CHEBI:29105"/>
    </ligand>
</feature>
<protein>
    <recommendedName>
        <fullName evidence="1">DNA ligase</fullName>
        <ecNumber evidence="1">6.5.1.2</ecNumber>
    </recommendedName>
    <alternativeName>
        <fullName evidence="1">Polydeoxyribonucleotide synthase [NAD(+)]</fullName>
    </alternativeName>
</protein>
<accession>Q8D2B9</accession>
<name>DNLJ_WIGBR</name>
<comment type="function">
    <text evidence="1">DNA ligase that catalyzes the formation of phosphodiester linkages between 5'-phosphoryl and 3'-hydroxyl groups in double-stranded DNA using NAD as a coenzyme and as the energy source for the reaction. It is essential for DNA replication and repair of damaged DNA.</text>
</comment>
<comment type="catalytic activity">
    <reaction evidence="1">
        <text>NAD(+) + (deoxyribonucleotide)n-3'-hydroxyl + 5'-phospho-(deoxyribonucleotide)m = (deoxyribonucleotide)n+m + AMP + beta-nicotinamide D-nucleotide.</text>
        <dbReference type="EC" id="6.5.1.2"/>
    </reaction>
</comment>
<comment type="cofactor">
    <cofactor evidence="1">
        <name>Mg(2+)</name>
        <dbReference type="ChEBI" id="CHEBI:18420"/>
    </cofactor>
    <cofactor evidence="1">
        <name>Mn(2+)</name>
        <dbReference type="ChEBI" id="CHEBI:29035"/>
    </cofactor>
</comment>
<comment type="similarity">
    <text evidence="1">Belongs to the NAD-dependent DNA ligase family. LigA subfamily.</text>
</comment>
<dbReference type="EC" id="6.5.1.2" evidence="1"/>
<dbReference type="EMBL" id="BA000021">
    <property type="protein sequence ID" value="BAC24581.1"/>
    <property type="molecule type" value="Genomic_DNA"/>
</dbReference>
<dbReference type="SMR" id="Q8D2B9"/>
<dbReference type="STRING" id="36870.gene:10368937"/>
<dbReference type="KEGG" id="wbr:lig"/>
<dbReference type="eggNOG" id="COG0272">
    <property type="taxonomic scope" value="Bacteria"/>
</dbReference>
<dbReference type="HOGENOM" id="CLU_007764_2_1_6"/>
<dbReference type="OrthoDB" id="9759736at2"/>
<dbReference type="Proteomes" id="UP000000562">
    <property type="component" value="Chromosome"/>
</dbReference>
<dbReference type="GO" id="GO:0003911">
    <property type="term" value="F:DNA ligase (NAD+) activity"/>
    <property type="evidence" value="ECO:0007669"/>
    <property type="project" value="UniProtKB-UniRule"/>
</dbReference>
<dbReference type="GO" id="GO:0046872">
    <property type="term" value="F:metal ion binding"/>
    <property type="evidence" value="ECO:0007669"/>
    <property type="project" value="UniProtKB-KW"/>
</dbReference>
<dbReference type="GO" id="GO:0006281">
    <property type="term" value="P:DNA repair"/>
    <property type="evidence" value="ECO:0007669"/>
    <property type="project" value="UniProtKB-KW"/>
</dbReference>
<dbReference type="GO" id="GO:0006260">
    <property type="term" value="P:DNA replication"/>
    <property type="evidence" value="ECO:0007669"/>
    <property type="project" value="UniProtKB-KW"/>
</dbReference>
<dbReference type="CDD" id="cd00114">
    <property type="entry name" value="LIGANc"/>
    <property type="match status" value="1"/>
</dbReference>
<dbReference type="FunFam" id="1.10.150.20:FF:000007">
    <property type="entry name" value="DNA ligase"/>
    <property type="match status" value="1"/>
</dbReference>
<dbReference type="FunFam" id="3.30.470.30:FF:000001">
    <property type="entry name" value="DNA ligase"/>
    <property type="match status" value="1"/>
</dbReference>
<dbReference type="Gene3D" id="1.10.150.20">
    <property type="entry name" value="5' to 3' exonuclease, C-terminal subdomain"/>
    <property type="match status" value="2"/>
</dbReference>
<dbReference type="Gene3D" id="3.30.470.30">
    <property type="entry name" value="DNA ligase/mRNA capping enzyme"/>
    <property type="match status" value="1"/>
</dbReference>
<dbReference type="Gene3D" id="1.10.287.610">
    <property type="entry name" value="Helix hairpin bin"/>
    <property type="match status" value="1"/>
</dbReference>
<dbReference type="Gene3D" id="2.40.50.140">
    <property type="entry name" value="Nucleic acid-binding proteins"/>
    <property type="match status" value="1"/>
</dbReference>
<dbReference type="HAMAP" id="MF_01588">
    <property type="entry name" value="DNA_ligase_A"/>
    <property type="match status" value="1"/>
</dbReference>
<dbReference type="InterPro" id="IPR041663">
    <property type="entry name" value="DisA/LigA_HHH"/>
</dbReference>
<dbReference type="InterPro" id="IPR001679">
    <property type="entry name" value="DNA_ligase"/>
</dbReference>
<dbReference type="InterPro" id="IPR018239">
    <property type="entry name" value="DNA_ligase_AS"/>
</dbReference>
<dbReference type="InterPro" id="IPR033136">
    <property type="entry name" value="DNA_ligase_CS"/>
</dbReference>
<dbReference type="InterPro" id="IPR013839">
    <property type="entry name" value="DNAligase_adenylation"/>
</dbReference>
<dbReference type="InterPro" id="IPR013840">
    <property type="entry name" value="DNAligase_N"/>
</dbReference>
<dbReference type="InterPro" id="IPR012340">
    <property type="entry name" value="NA-bd_OB-fold"/>
</dbReference>
<dbReference type="InterPro" id="IPR004150">
    <property type="entry name" value="NAD_DNA_ligase_OB"/>
</dbReference>
<dbReference type="InterPro" id="IPR010994">
    <property type="entry name" value="RuvA_2-like"/>
</dbReference>
<dbReference type="NCBIfam" id="TIGR00575">
    <property type="entry name" value="dnlj"/>
    <property type="match status" value="1"/>
</dbReference>
<dbReference type="NCBIfam" id="NF005932">
    <property type="entry name" value="PRK07956.1"/>
    <property type="match status" value="1"/>
</dbReference>
<dbReference type="Pfam" id="PF01653">
    <property type="entry name" value="DNA_ligase_aden"/>
    <property type="match status" value="1"/>
</dbReference>
<dbReference type="Pfam" id="PF03120">
    <property type="entry name" value="DNA_ligase_OB"/>
    <property type="match status" value="1"/>
</dbReference>
<dbReference type="Pfam" id="PF12826">
    <property type="entry name" value="HHH_2"/>
    <property type="match status" value="1"/>
</dbReference>
<dbReference type="Pfam" id="PF14520">
    <property type="entry name" value="HHH_5"/>
    <property type="match status" value="1"/>
</dbReference>
<dbReference type="PIRSF" id="PIRSF001604">
    <property type="entry name" value="LigA"/>
    <property type="match status" value="1"/>
</dbReference>
<dbReference type="SMART" id="SM00532">
    <property type="entry name" value="LIGANc"/>
    <property type="match status" value="1"/>
</dbReference>
<dbReference type="SUPFAM" id="SSF56091">
    <property type="entry name" value="DNA ligase/mRNA capping enzyme, catalytic domain"/>
    <property type="match status" value="1"/>
</dbReference>
<dbReference type="SUPFAM" id="SSF50249">
    <property type="entry name" value="Nucleic acid-binding proteins"/>
    <property type="match status" value="1"/>
</dbReference>
<dbReference type="SUPFAM" id="SSF47781">
    <property type="entry name" value="RuvA domain 2-like"/>
    <property type="match status" value="1"/>
</dbReference>
<dbReference type="PROSITE" id="PS01055">
    <property type="entry name" value="DNA_LIGASE_N1"/>
    <property type="match status" value="1"/>
</dbReference>
<dbReference type="PROSITE" id="PS01056">
    <property type="entry name" value="DNA_LIGASE_N2"/>
    <property type="match status" value="1"/>
</dbReference>
<keyword id="KW-0227">DNA damage</keyword>
<keyword id="KW-0234">DNA repair</keyword>
<keyword id="KW-0235">DNA replication</keyword>
<keyword id="KW-0436">Ligase</keyword>
<keyword id="KW-0460">Magnesium</keyword>
<keyword id="KW-0464">Manganese</keyword>
<keyword id="KW-0479">Metal-binding</keyword>
<keyword id="KW-0520">NAD</keyword>
<keyword id="KW-1185">Reference proteome</keyword>
<keyword id="KW-0862">Zinc</keyword>
<sequence>MFKKNINIKIKTKILNLRKKIEMWNNNYYVKNLSLVSDEKYDSTLFELNELEKKYSMFLNTSYSNKIVAKNICNKFKKIKHLSNMLSLESIFNYKNLLNFHEKVKKNLFYNEKRYYCCELKIDGLAINLIYKNGILDSASTRGDGLQGEDVTKNALEIKSIPHILKKNNLSFPKKIEIRGEVFIKLSTFNKINKMLKSKRKKLFSNARNMASGSLRQINPKITKNRSLSFYGYGIGYVNEKKYYYDQHDALKLINSWGIPIEKNTELCKSLNEVKNFYEKSIKIRDYLDFNIDGIVVKVNSMKLQKKLGCSSKYPRWAIAYKFSSEEKCTKILGVNFNVGRTGVITPVAKLKPVYFMGTIIKYSSLHNKDIIDKLGIMINDTVCLKKSGDVIPKISRVIFEKRKNVKEIIFPKTCIFCKSKIEFCLRKKNLYCTGGFLCYAQRKQLLNHFVSREALNIKGMGNKIISQLIEKKIIKYPSDIFKLNTDKIIFLKGMGLKSSENLIKEIIKSKTTELYRVIYGIGIPNVGIYTSMNLANYYKNISNFINTSYEDLRSIKGIGSFTSNCIKKFLKDKRNISIISDLLNVNLKIK</sequence>